<sequence length="170" mass="19534">MAKLTILEFPDERLRTKAAPVETVDDETRKLVDDMLETMYDAQGIGLAATQVDVHRRVIVMDVSDDRSQPRVLINPEYTPLGDEREPMQEGCLSIPEYYAEVPRALRVSLKALDRDGNPYELEADGLLAHCIQHEYDHLEGVLFVDYLSPLKRDRVLKKMQKRHRAMQDA</sequence>
<protein>
    <recommendedName>
        <fullName evidence="1">Peptide deformylase</fullName>
        <shortName evidence="1">PDF</shortName>
        <ecNumber evidence="1">3.5.1.88</ecNumber>
    </recommendedName>
    <alternativeName>
        <fullName evidence="1">Polypeptide deformylase</fullName>
    </alternativeName>
</protein>
<proteinExistence type="inferred from homology"/>
<comment type="function">
    <text evidence="1">Removes the formyl group from the N-terminal Met of newly synthesized proteins. Requires at least a dipeptide for an efficient rate of reaction. N-terminal L-methionine is a prerequisite for activity but the enzyme has broad specificity at other positions.</text>
</comment>
<comment type="catalytic activity">
    <reaction evidence="1">
        <text>N-terminal N-formyl-L-methionyl-[peptide] + H2O = N-terminal L-methionyl-[peptide] + formate</text>
        <dbReference type="Rhea" id="RHEA:24420"/>
        <dbReference type="Rhea" id="RHEA-COMP:10639"/>
        <dbReference type="Rhea" id="RHEA-COMP:10640"/>
        <dbReference type="ChEBI" id="CHEBI:15377"/>
        <dbReference type="ChEBI" id="CHEBI:15740"/>
        <dbReference type="ChEBI" id="CHEBI:49298"/>
        <dbReference type="ChEBI" id="CHEBI:64731"/>
        <dbReference type="EC" id="3.5.1.88"/>
    </reaction>
</comment>
<comment type="cofactor">
    <cofactor evidence="1">
        <name>Fe(2+)</name>
        <dbReference type="ChEBI" id="CHEBI:29033"/>
    </cofactor>
    <text evidence="1">Binds 1 Fe(2+) ion.</text>
</comment>
<comment type="similarity">
    <text evidence="1">Belongs to the polypeptide deformylase family.</text>
</comment>
<name>DEF_CHRSD</name>
<gene>
    <name evidence="1" type="primary">def</name>
    <name type="ordered locus">Csal_2867</name>
</gene>
<evidence type="ECO:0000255" key="1">
    <source>
        <dbReference type="HAMAP-Rule" id="MF_00163"/>
    </source>
</evidence>
<accession>Q1QTJ5</accession>
<organism>
    <name type="scientific">Chromohalobacter salexigens (strain ATCC BAA-138 / DSM 3043 / CIP 106854 / NCIMB 13768 / 1H11)</name>
    <dbReference type="NCBI Taxonomy" id="290398"/>
    <lineage>
        <taxon>Bacteria</taxon>
        <taxon>Pseudomonadati</taxon>
        <taxon>Pseudomonadota</taxon>
        <taxon>Gammaproteobacteria</taxon>
        <taxon>Oceanospirillales</taxon>
        <taxon>Halomonadaceae</taxon>
        <taxon>Chromohalobacter</taxon>
    </lineage>
</organism>
<keyword id="KW-0378">Hydrolase</keyword>
<keyword id="KW-0408">Iron</keyword>
<keyword id="KW-0479">Metal-binding</keyword>
<keyword id="KW-0648">Protein biosynthesis</keyword>
<keyword id="KW-1185">Reference proteome</keyword>
<feature type="chain" id="PRO_0000301020" description="Peptide deformylase">
    <location>
        <begin position="1"/>
        <end position="170"/>
    </location>
</feature>
<feature type="active site" evidence="1">
    <location>
        <position position="135"/>
    </location>
</feature>
<feature type="binding site" evidence="1">
    <location>
        <position position="92"/>
    </location>
    <ligand>
        <name>Fe cation</name>
        <dbReference type="ChEBI" id="CHEBI:24875"/>
    </ligand>
</feature>
<feature type="binding site" evidence="1">
    <location>
        <position position="134"/>
    </location>
    <ligand>
        <name>Fe cation</name>
        <dbReference type="ChEBI" id="CHEBI:24875"/>
    </ligand>
</feature>
<feature type="binding site" evidence="1">
    <location>
        <position position="138"/>
    </location>
    <ligand>
        <name>Fe cation</name>
        <dbReference type="ChEBI" id="CHEBI:24875"/>
    </ligand>
</feature>
<reference key="1">
    <citation type="journal article" date="2011" name="Stand. Genomic Sci.">
        <title>Complete genome sequence of the halophilic and highly halotolerant Chromohalobacter salexigens type strain (1H11(T)).</title>
        <authorList>
            <person name="Copeland A."/>
            <person name="O'Connor K."/>
            <person name="Lucas S."/>
            <person name="Lapidus A."/>
            <person name="Berry K.W."/>
            <person name="Detter J.C."/>
            <person name="Del Rio T.G."/>
            <person name="Hammon N."/>
            <person name="Dalin E."/>
            <person name="Tice H."/>
            <person name="Pitluck S."/>
            <person name="Bruce D."/>
            <person name="Goodwin L."/>
            <person name="Han C."/>
            <person name="Tapia R."/>
            <person name="Saunders E."/>
            <person name="Schmutz J."/>
            <person name="Brettin T."/>
            <person name="Larimer F."/>
            <person name="Land M."/>
            <person name="Hauser L."/>
            <person name="Vargas C."/>
            <person name="Nieto J.J."/>
            <person name="Kyrpides N.C."/>
            <person name="Ivanova N."/>
            <person name="Goker M."/>
            <person name="Klenk H.P."/>
            <person name="Csonka L.N."/>
            <person name="Woyke T."/>
        </authorList>
    </citation>
    <scope>NUCLEOTIDE SEQUENCE [LARGE SCALE GENOMIC DNA]</scope>
    <source>
        <strain>ATCC BAA-138 / DSM 3043 / CIP 106854 / NCIMB 13768 / 1H11</strain>
    </source>
</reference>
<dbReference type="EC" id="3.5.1.88" evidence="1"/>
<dbReference type="EMBL" id="CP000285">
    <property type="protein sequence ID" value="ABE60213.1"/>
    <property type="molecule type" value="Genomic_DNA"/>
</dbReference>
<dbReference type="RefSeq" id="WP_011508159.1">
    <property type="nucleotide sequence ID" value="NC_007963.1"/>
</dbReference>
<dbReference type="SMR" id="Q1QTJ5"/>
<dbReference type="STRING" id="290398.Csal_2867"/>
<dbReference type="GeneID" id="95335562"/>
<dbReference type="KEGG" id="csa:Csal_2867"/>
<dbReference type="eggNOG" id="COG0242">
    <property type="taxonomic scope" value="Bacteria"/>
</dbReference>
<dbReference type="HOGENOM" id="CLU_061901_2_1_6"/>
<dbReference type="OrthoDB" id="9804313at2"/>
<dbReference type="Proteomes" id="UP000000239">
    <property type="component" value="Chromosome"/>
</dbReference>
<dbReference type="GO" id="GO:0046872">
    <property type="term" value="F:metal ion binding"/>
    <property type="evidence" value="ECO:0007669"/>
    <property type="project" value="UniProtKB-KW"/>
</dbReference>
<dbReference type="GO" id="GO:0042586">
    <property type="term" value="F:peptide deformylase activity"/>
    <property type="evidence" value="ECO:0007669"/>
    <property type="project" value="UniProtKB-UniRule"/>
</dbReference>
<dbReference type="GO" id="GO:0043686">
    <property type="term" value="P:co-translational protein modification"/>
    <property type="evidence" value="ECO:0007669"/>
    <property type="project" value="TreeGrafter"/>
</dbReference>
<dbReference type="GO" id="GO:0006412">
    <property type="term" value="P:translation"/>
    <property type="evidence" value="ECO:0007669"/>
    <property type="project" value="UniProtKB-UniRule"/>
</dbReference>
<dbReference type="CDD" id="cd00487">
    <property type="entry name" value="Pep_deformylase"/>
    <property type="match status" value="1"/>
</dbReference>
<dbReference type="FunFam" id="3.90.45.10:FF:000001">
    <property type="entry name" value="Peptide deformylase"/>
    <property type="match status" value="1"/>
</dbReference>
<dbReference type="Gene3D" id="3.90.45.10">
    <property type="entry name" value="Peptide deformylase"/>
    <property type="match status" value="1"/>
</dbReference>
<dbReference type="HAMAP" id="MF_00163">
    <property type="entry name" value="Pep_deformylase"/>
    <property type="match status" value="1"/>
</dbReference>
<dbReference type="InterPro" id="IPR023635">
    <property type="entry name" value="Peptide_deformylase"/>
</dbReference>
<dbReference type="InterPro" id="IPR036821">
    <property type="entry name" value="Peptide_deformylase_sf"/>
</dbReference>
<dbReference type="NCBIfam" id="TIGR00079">
    <property type="entry name" value="pept_deformyl"/>
    <property type="match status" value="1"/>
</dbReference>
<dbReference type="NCBIfam" id="NF001159">
    <property type="entry name" value="PRK00150.1-3"/>
    <property type="match status" value="1"/>
</dbReference>
<dbReference type="PANTHER" id="PTHR10458">
    <property type="entry name" value="PEPTIDE DEFORMYLASE"/>
    <property type="match status" value="1"/>
</dbReference>
<dbReference type="PANTHER" id="PTHR10458:SF21">
    <property type="entry name" value="PEPTIDE DEFORMYLASE"/>
    <property type="match status" value="1"/>
</dbReference>
<dbReference type="Pfam" id="PF01327">
    <property type="entry name" value="Pep_deformylase"/>
    <property type="match status" value="1"/>
</dbReference>
<dbReference type="PIRSF" id="PIRSF004749">
    <property type="entry name" value="Pep_def"/>
    <property type="match status" value="1"/>
</dbReference>
<dbReference type="PRINTS" id="PR01576">
    <property type="entry name" value="PDEFORMYLASE"/>
</dbReference>
<dbReference type="SUPFAM" id="SSF56420">
    <property type="entry name" value="Peptide deformylase"/>
    <property type="match status" value="1"/>
</dbReference>